<feature type="chain" id="PRO_1000001057" description="Dihydroxy-acid dehydratase">
    <location>
        <begin position="1"/>
        <end position="619"/>
    </location>
</feature>
<feature type="active site" description="Proton acceptor" evidence="1">
    <location>
        <position position="520"/>
    </location>
</feature>
<feature type="binding site" evidence="1">
    <location>
        <position position="81"/>
    </location>
    <ligand>
        <name>Mg(2+)</name>
        <dbReference type="ChEBI" id="CHEBI:18420"/>
    </ligand>
</feature>
<feature type="binding site" evidence="1">
    <location>
        <position position="122"/>
    </location>
    <ligand>
        <name>[2Fe-2S] cluster</name>
        <dbReference type="ChEBI" id="CHEBI:190135"/>
    </ligand>
</feature>
<feature type="binding site" evidence="1">
    <location>
        <position position="123"/>
    </location>
    <ligand>
        <name>Mg(2+)</name>
        <dbReference type="ChEBI" id="CHEBI:18420"/>
    </ligand>
</feature>
<feature type="binding site" description="via carbamate group" evidence="1">
    <location>
        <position position="124"/>
    </location>
    <ligand>
        <name>Mg(2+)</name>
        <dbReference type="ChEBI" id="CHEBI:18420"/>
    </ligand>
</feature>
<feature type="binding site" evidence="1">
    <location>
        <position position="195"/>
    </location>
    <ligand>
        <name>[2Fe-2S] cluster</name>
        <dbReference type="ChEBI" id="CHEBI:190135"/>
    </ligand>
</feature>
<feature type="binding site" evidence="1">
    <location>
        <position position="494"/>
    </location>
    <ligand>
        <name>Mg(2+)</name>
        <dbReference type="ChEBI" id="CHEBI:18420"/>
    </ligand>
</feature>
<feature type="modified residue" description="N6-carboxylysine" evidence="1">
    <location>
        <position position="124"/>
    </location>
</feature>
<evidence type="ECO:0000255" key="1">
    <source>
        <dbReference type="HAMAP-Rule" id="MF_00012"/>
    </source>
</evidence>
<comment type="function">
    <text evidence="1">Functions in the biosynthesis of branched-chain amino acids. Catalyzes the dehydration of (2R,3R)-2,3-dihydroxy-3-methylpentanoate (2,3-dihydroxy-3-methylvalerate) into 2-oxo-3-methylpentanoate (2-oxo-3-methylvalerate) and of (2R)-2,3-dihydroxy-3-methylbutanoate (2,3-dihydroxyisovalerate) into 2-oxo-3-methylbutanoate (2-oxoisovalerate), the penultimate precursor to L-isoleucine and L-valine, respectively.</text>
</comment>
<comment type="catalytic activity">
    <reaction evidence="1">
        <text>(2R)-2,3-dihydroxy-3-methylbutanoate = 3-methyl-2-oxobutanoate + H2O</text>
        <dbReference type="Rhea" id="RHEA:24809"/>
        <dbReference type="ChEBI" id="CHEBI:11851"/>
        <dbReference type="ChEBI" id="CHEBI:15377"/>
        <dbReference type="ChEBI" id="CHEBI:49072"/>
        <dbReference type="EC" id="4.2.1.9"/>
    </reaction>
    <physiologicalReaction direction="left-to-right" evidence="1">
        <dbReference type="Rhea" id="RHEA:24810"/>
    </physiologicalReaction>
</comment>
<comment type="catalytic activity">
    <reaction evidence="1">
        <text>(2R,3R)-2,3-dihydroxy-3-methylpentanoate = (S)-3-methyl-2-oxopentanoate + H2O</text>
        <dbReference type="Rhea" id="RHEA:27694"/>
        <dbReference type="ChEBI" id="CHEBI:15377"/>
        <dbReference type="ChEBI" id="CHEBI:35146"/>
        <dbReference type="ChEBI" id="CHEBI:49258"/>
        <dbReference type="EC" id="4.2.1.9"/>
    </reaction>
    <physiologicalReaction direction="left-to-right" evidence="1">
        <dbReference type="Rhea" id="RHEA:27695"/>
    </physiologicalReaction>
</comment>
<comment type="cofactor">
    <cofactor evidence="1">
        <name>[2Fe-2S] cluster</name>
        <dbReference type="ChEBI" id="CHEBI:190135"/>
    </cofactor>
    <text evidence="1">Binds 1 [2Fe-2S] cluster per subunit. This cluster acts as a Lewis acid cofactor.</text>
</comment>
<comment type="cofactor">
    <cofactor evidence="1">
        <name>Mg(2+)</name>
        <dbReference type="ChEBI" id="CHEBI:18420"/>
    </cofactor>
</comment>
<comment type="pathway">
    <text evidence="1">Amino-acid biosynthesis; L-isoleucine biosynthesis; L-isoleucine from 2-oxobutanoate: step 3/4.</text>
</comment>
<comment type="pathway">
    <text evidence="1">Amino-acid biosynthesis; L-valine biosynthesis; L-valine from pyruvate: step 3/4.</text>
</comment>
<comment type="subunit">
    <text evidence="1">Homodimer.</text>
</comment>
<comment type="similarity">
    <text evidence="1">Belongs to the IlvD/Edd family.</text>
</comment>
<protein>
    <recommendedName>
        <fullName evidence="1">Dihydroxy-acid dehydratase</fullName>
        <shortName evidence="1">DAD</shortName>
        <ecNumber evidence="1">4.2.1.9</ecNumber>
    </recommendedName>
</protein>
<proteinExistence type="inferred from homology"/>
<name>ILVD_SHESM</name>
<accession>Q0HNC3</accession>
<organism>
    <name type="scientific">Shewanella sp. (strain MR-4)</name>
    <dbReference type="NCBI Taxonomy" id="60480"/>
    <lineage>
        <taxon>Bacteria</taxon>
        <taxon>Pseudomonadati</taxon>
        <taxon>Pseudomonadota</taxon>
        <taxon>Gammaproteobacteria</taxon>
        <taxon>Alteromonadales</taxon>
        <taxon>Shewanellaceae</taxon>
        <taxon>Shewanella</taxon>
    </lineage>
</organism>
<gene>
    <name evidence="1" type="primary">ilvD</name>
    <name type="ordered locus">Shewmr4_0364</name>
</gene>
<reference key="1">
    <citation type="submission" date="2006-08" db="EMBL/GenBank/DDBJ databases">
        <title>Complete sequence of Shewanella sp. MR-4.</title>
        <authorList>
            <consortium name="US DOE Joint Genome Institute"/>
            <person name="Copeland A."/>
            <person name="Lucas S."/>
            <person name="Lapidus A."/>
            <person name="Barry K."/>
            <person name="Detter J.C."/>
            <person name="Glavina del Rio T."/>
            <person name="Hammon N."/>
            <person name="Israni S."/>
            <person name="Dalin E."/>
            <person name="Tice H."/>
            <person name="Pitluck S."/>
            <person name="Kiss H."/>
            <person name="Brettin T."/>
            <person name="Bruce D."/>
            <person name="Han C."/>
            <person name="Tapia R."/>
            <person name="Gilna P."/>
            <person name="Schmutz J."/>
            <person name="Larimer F."/>
            <person name="Land M."/>
            <person name="Hauser L."/>
            <person name="Kyrpides N."/>
            <person name="Mikhailova N."/>
            <person name="Nealson K."/>
            <person name="Konstantinidis K."/>
            <person name="Klappenbach J."/>
            <person name="Tiedje J."/>
            <person name="Richardson P."/>
        </authorList>
    </citation>
    <scope>NUCLEOTIDE SEQUENCE [LARGE SCALE GENOMIC DNA]</scope>
    <source>
        <strain>MR-4</strain>
    </source>
</reference>
<keyword id="KW-0001">2Fe-2S</keyword>
<keyword id="KW-0028">Amino-acid biosynthesis</keyword>
<keyword id="KW-0100">Branched-chain amino acid biosynthesis</keyword>
<keyword id="KW-0408">Iron</keyword>
<keyword id="KW-0411">Iron-sulfur</keyword>
<keyword id="KW-0456">Lyase</keyword>
<keyword id="KW-0460">Magnesium</keyword>
<keyword id="KW-0479">Metal-binding</keyword>
<dbReference type="EC" id="4.2.1.9" evidence="1"/>
<dbReference type="EMBL" id="CP000446">
    <property type="protein sequence ID" value="ABI37444.1"/>
    <property type="molecule type" value="Genomic_DNA"/>
</dbReference>
<dbReference type="RefSeq" id="WP_011621170.1">
    <property type="nucleotide sequence ID" value="NC_008321.1"/>
</dbReference>
<dbReference type="SMR" id="Q0HNC3"/>
<dbReference type="KEGG" id="she:Shewmr4_0364"/>
<dbReference type="HOGENOM" id="CLU_014271_4_2_6"/>
<dbReference type="UniPathway" id="UPA00047">
    <property type="reaction ID" value="UER00057"/>
</dbReference>
<dbReference type="UniPathway" id="UPA00049">
    <property type="reaction ID" value="UER00061"/>
</dbReference>
<dbReference type="GO" id="GO:0005829">
    <property type="term" value="C:cytosol"/>
    <property type="evidence" value="ECO:0007669"/>
    <property type="project" value="TreeGrafter"/>
</dbReference>
<dbReference type="GO" id="GO:0051537">
    <property type="term" value="F:2 iron, 2 sulfur cluster binding"/>
    <property type="evidence" value="ECO:0007669"/>
    <property type="project" value="UniProtKB-UniRule"/>
</dbReference>
<dbReference type="GO" id="GO:0004160">
    <property type="term" value="F:dihydroxy-acid dehydratase activity"/>
    <property type="evidence" value="ECO:0007669"/>
    <property type="project" value="UniProtKB-UniRule"/>
</dbReference>
<dbReference type="GO" id="GO:0000287">
    <property type="term" value="F:magnesium ion binding"/>
    <property type="evidence" value="ECO:0007669"/>
    <property type="project" value="UniProtKB-UniRule"/>
</dbReference>
<dbReference type="GO" id="GO:0009097">
    <property type="term" value="P:isoleucine biosynthetic process"/>
    <property type="evidence" value="ECO:0007669"/>
    <property type="project" value="UniProtKB-UniRule"/>
</dbReference>
<dbReference type="GO" id="GO:0009099">
    <property type="term" value="P:L-valine biosynthetic process"/>
    <property type="evidence" value="ECO:0007669"/>
    <property type="project" value="UniProtKB-UniRule"/>
</dbReference>
<dbReference type="FunFam" id="3.50.30.80:FF:000001">
    <property type="entry name" value="Dihydroxy-acid dehydratase"/>
    <property type="match status" value="1"/>
</dbReference>
<dbReference type="Gene3D" id="3.50.30.80">
    <property type="entry name" value="IlvD/EDD C-terminal domain-like"/>
    <property type="match status" value="1"/>
</dbReference>
<dbReference type="HAMAP" id="MF_00012">
    <property type="entry name" value="IlvD"/>
    <property type="match status" value="1"/>
</dbReference>
<dbReference type="InterPro" id="IPR042096">
    <property type="entry name" value="Dihydro-acid_dehy_C"/>
</dbReference>
<dbReference type="InterPro" id="IPR004404">
    <property type="entry name" value="DihydroxyA_deHydtase"/>
</dbReference>
<dbReference type="InterPro" id="IPR020558">
    <property type="entry name" value="DiOHA_6PGluconate_deHydtase_CS"/>
</dbReference>
<dbReference type="InterPro" id="IPR056740">
    <property type="entry name" value="ILV_EDD_C"/>
</dbReference>
<dbReference type="InterPro" id="IPR000581">
    <property type="entry name" value="ILV_EDD_N"/>
</dbReference>
<dbReference type="InterPro" id="IPR037237">
    <property type="entry name" value="IlvD/EDD_N"/>
</dbReference>
<dbReference type="NCBIfam" id="TIGR00110">
    <property type="entry name" value="ilvD"/>
    <property type="match status" value="1"/>
</dbReference>
<dbReference type="NCBIfam" id="NF009103">
    <property type="entry name" value="PRK12448.1"/>
    <property type="match status" value="1"/>
</dbReference>
<dbReference type="PANTHER" id="PTHR43661">
    <property type="entry name" value="D-XYLONATE DEHYDRATASE"/>
    <property type="match status" value="1"/>
</dbReference>
<dbReference type="PANTHER" id="PTHR43661:SF3">
    <property type="entry name" value="D-XYLONATE DEHYDRATASE YAGF-RELATED"/>
    <property type="match status" value="1"/>
</dbReference>
<dbReference type="Pfam" id="PF24877">
    <property type="entry name" value="ILV_EDD_C"/>
    <property type="match status" value="1"/>
</dbReference>
<dbReference type="Pfam" id="PF00920">
    <property type="entry name" value="ILVD_EDD_N"/>
    <property type="match status" value="1"/>
</dbReference>
<dbReference type="SUPFAM" id="SSF143975">
    <property type="entry name" value="IlvD/EDD N-terminal domain-like"/>
    <property type="match status" value="1"/>
</dbReference>
<dbReference type="SUPFAM" id="SSF52016">
    <property type="entry name" value="LeuD/IlvD-like"/>
    <property type="match status" value="1"/>
</dbReference>
<dbReference type="PROSITE" id="PS00886">
    <property type="entry name" value="ILVD_EDD_1"/>
    <property type="match status" value="1"/>
</dbReference>
<dbReference type="PROSITE" id="PS00887">
    <property type="entry name" value="ILVD_EDD_2"/>
    <property type="match status" value="1"/>
</dbReference>
<sequence>MPKLRSATSTEGRNMAGARALWRATGVKDNDFGKPIIAIANSFTQFVPGHVHLKDMGSLVAGAIEEAGGIAKEFNTIAVDDGIAMGHGGMLYSLPSRELIADSVEYMVNAHCADALVCISNCDKITPGMLMAALRLNIPVVFVSGGPMEAGKTKLSDKLIKLDLVDAMVAAADSSVSDEDSAKIERSACPTCGSCSGMFTANSMNCLTEALGLSLPGNGSMLATHADRRELFLEAGRRVMALTKRYYEKDDASALPRNIASFKAFENAMALDIAMGGSSNTVLHLLAAAQEADVAFTMDDIDRMSRQVPHLCKVAPSTAKYHMEDVHRAGGVMGILGELDRAGLLHTDVPHVAADAGGNLKSVLAKYDVMQTQDDNVKQFFMAGPAGIPTTKAFSQDCRWPSLDDDRREGCIRSREFAFSQEGGLAVLSGNLADNGCIVKTAGVDESNLTFTGSARVYESQDDAVAGILGGEVVAGDVVVIRYEGPKGGPGMQEMLYPTSYLKSRGLGKACALITDGRFSGGTSGLSIGHVSPEAAAGGTIALIENGDRIEIDIPKRSIKLAVSDAELAARRETMLARGPMAWKPLSRQRYVSMALKAYAMLATSADKGAVRDRSKLED</sequence>